<proteinExistence type="inferred from homology"/>
<name>KAD_ACISJ</name>
<sequence length="218" mass="23705">MRLILLGAPGAGKGTQAAFICQKFGIPQISTGDMLRAAVKAGTPLGLQAKAVMDAGQLVSDDLIINLVKERIAEPDCAQGFLFDGFPRTIPQADAMKAAGVKLDYVLEIDVPFDAIIERMSGRRSHPASGRTYHVKFNPPKVEGKDDVTGEPLVQREDDKEETVKKRLQVYSDQTRPLVDYYSSWAKTDPANAPKYRAIQGTGSVEEITQRALTALSS</sequence>
<protein>
    <recommendedName>
        <fullName evidence="1">Adenylate kinase</fullName>
        <shortName evidence="1">AK</shortName>
        <ecNumber evidence="1">2.7.4.3</ecNumber>
    </recommendedName>
    <alternativeName>
        <fullName evidence="1">ATP-AMP transphosphorylase</fullName>
    </alternativeName>
    <alternativeName>
        <fullName evidence="1">ATP:AMP phosphotransferase</fullName>
    </alternativeName>
    <alternativeName>
        <fullName evidence="1">Adenylate monophosphate kinase</fullName>
    </alternativeName>
</protein>
<accession>A1W895</accession>
<dbReference type="EC" id="2.7.4.3" evidence="1"/>
<dbReference type="EMBL" id="CP000539">
    <property type="protein sequence ID" value="ABM42470.1"/>
    <property type="molecule type" value="Genomic_DNA"/>
</dbReference>
<dbReference type="SMR" id="A1W895"/>
<dbReference type="STRING" id="232721.Ajs_2308"/>
<dbReference type="KEGG" id="ajs:Ajs_2308"/>
<dbReference type="eggNOG" id="COG0563">
    <property type="taxonomic scope" value="Bacteria"/>
</dbReference>
<dbReference type="HOGENOM" id="CLU_032354_1_2_4"/>
<dbReference type="UniPathway" id="UPA00588">
    <property type="reaction ID" value="UER00649"/>
</dbReference>
<dbReference type="Proteomes" id="UP000000645">
    <property type="component" value="Chromosome"/>
</dbReference>
<dbReference type="GO" id="GO:0005737">
    <property type="term" value="C:cytoplasm"/>
    <property type="evidence" value="ECO:0007669"/>
    <property type="project" value="UniProtKB-SubCell"/>
</dbReference>
<dbReference type="GO" id="GO:0004017">
    <property type="term" value="F:adenylate kinase activity"/>
    <property type="evidence" value="ECO:0007669"/>
    <property type="project" value="UniProtKB-UniRule"/>
</dbReference>
<dbReference type="GO" id="GO:0005524">
    <property type="term" value="F:ATP binding"/>
    <property type="evidence" value="ECO:0007669"/>
    <property type="project" value="UniProtKB-UniRule"/>
</dbReference>
<dbReference type="GO" id="GO:0044209">
    <property type="term" value="P:AMP salvage"/>
    <property type="evidence" value="ECO:0007669"/>
    <property type="project" value="UniProtKB-UniRule"/>
</dbReference>
<dbReference type="CDD" id="cd01428">
    <property type="entry name" value="ADK"/>
    <property type="match status" value="1"/>
</dbReference>
<dbReference type="FunFam" id="3.40.50.300:FF:000106">
    <property type="entry name" value="Adenylate kinase mitochondrial"/>
    <property type="match status" value="1"/>
</dbReference>
<dbReference type="Gene3D" id="3.40.50.300">
    <property type="entry name" value="P-loop containing nucleotide triphosphate hydrolases"/>
    <property type="match status" value="1"/>
</dbReference>
<dbReference type="HAMAP" id="MF_00235">
    <property type="entry name" value="Adenylate_kinase_Adk"/>
    <property type="match status" value="1"/>
</dbReference>
<dbReference type="InterPro" id="IPR006259">
    <property type="entry name" value="Adenyl_kin_sub"/>
</dbReference>
<dbReference type="InterPro" id="IPR000850">
    <property type="entry name" value="Adenylat/UMP-CMP_kin"/>
</dbReference>
<dbReference type="InterPro" id="IPR033690">
    <property type="entry name" value="Adenylat_kinase_CS"/>
</dbReference>
<dbReference type="InterPro" id="IPR007862">
    <property type="entry name" value="Adenylate_kinase_lid-dom"/>
</dbReference>
<dbReference type="InterPro" id="IPR027417">
    <property type="entry name" value="P-loop_NTPase"/>
</dbReference>
<dbReference type="NCBIfam" id="TIGR01351">
    <property type="entry name" value="adk"/>
    <property type="match status" value="1"/>
</dbReference>
<dbReference type="NCBIfam" id="NF001379">
    <property type="entry name" value="PRK00279.1-1"/>
    <property type="match status" value="1"/>
</dbReference>
<dbReference type="NCBIfam" id="NF001380">
    <property type="entry name" value="PRK00279.1-2"/>
    <property type="match status" value="1"/>
</dbReference>
<dbReference type="NCBIfam" id="NF001381">
    <property type="entry name" value="PRK00279.1-3"/>
    <property type="match status" value="1"/>
</dbReference>
<dbReference type="NCBIfam" id="NF011100">
    <property type="entry name" value="PRK14527.1"/>
    <property type="match status" value="1"/>
</dbReference>
<dbReference type="PANTHER" id="PTHR23359">
    <property type="entry name" value="NUCLEOTIDE KINASE"/>
    <property type="match status" value="1"/>
</dbReference>
<dbReference type="Pfam" id="PF00406">
    <property type="entry name" value="ADK"/>
    <property type="match status" value="1"/>
</dbReference>
<dbReference type="Pfam" id="PF05191">
    <property type="entry name" value="ADK_lid"/>
    <property type="match status" value="1"/>
</dbReference>
<dbReference type="PRINTS" id="PR00094">
    <property type="entry name" value="ADENYLTKNASE"/>
</dbReference>
<dbReference type="SUPFAM" id="SSF52540">
    <property type="entry name" value="P-loop containing nucleoside triphosphate hydrolases"/>
    <property type="match status" value="1"/>
</dbReference>
<dbReference type="PROSITE" id="PS00113">
    <property type="entry name" value="ADENYLATE_KINASE"/>
    <property type="match status" value="1"/>
</dbReference>
<organism>
    <name type="scientific">Acidovorax sp. (strain JS42)</name>
    <dbReference type="NCBI Taxonomy" id="232721"/>
    <lineage>
        <taxon>Bacteria</taxon>
        <taxon>Pseudomonadati</taxon>
        <taxon>Pseudomonadota</taxon>
        <taxon>Betaproteobacteria</taxon>
        <taxon>Burkholderiales</taxon>
        <taxon>Comamonadaceae</taxon>
        <taxon>Acidovorax</taxon>
    </lineage>
</organism>
<reference key="1">
    <citation type="submission" date="2006-12" db="EMBL/GenBank/DDBJ databases">
        <title>Complete sequence of chromosome 1 of Acidovorax sp. JS42.</title>
        <authorList>
            <person name="Copeland A."/>
            <person name="Lucas S."/>
            <person name="Lapidus A."/>
            <person name="Barry K."/>
            <person name="Detter J.C."/>
            <person name="Glavina del Rio T."/>
            <person name="Dalin E."/>
            <person name="Tice H."/>
            <person name="Pitluck S."/>
            <person name="Chertkov O."/>
            <person name="Brettin T."/>
            <person name="Bruce D."/>
            <person name="Han C."/>
            <person name="Tapia R."/>
            <person name="Gilna P."/>
            <person name="Schmutz J."/>
            <person name="Larimer F."/>
            <person name="Land M."/>
            <person name="Hauser L."/>
            <person name="Kyrpides N."/>
            <person name="Kim E."/>
            <person name="Stahl D."/>
            <person name="Richardson P."/>
        </authorList>
    </citation>
    <scope>NUCLEOTIDE SEQUENCE [LARGE SCALE GENOMIC DNA]</scope>
    <source>
        <strain>JS42</strain>
    </source>
</reference>
<feature type="chain" id="PRO_1000058776" description="Adenylate kinase">
    <location>
        <begin position="1"/>
        <end position="218"/>
    </location>
</feature>
<feature type="region of interest" description="NMP" evidence="1">
    <location>
        <begin position="30"/>
        <end position="59"/>
    </location>
</feature>
<feature type="region of interest" description="LID" evidence="1">
    <location>
        <begin position="122"/>
        <end position="159"/>
    </location>
</feature>
<feature type="region of interest" description="Disordered" evidence="2">
    <location>
        <begin position="127"/>
        <end position="150"/>
    </location>
</feature>
<feature type="binding site" evidence="1">
    <location>
        <begin position="10"/>
        <end position="15"/>
    </location>
    <ligand>
        <name>ATP</name>
        <dbReference type="ChEBI" id="CHEBI:30616"/>
    </ligand>
</feature>
<feature type="binding site" evidence="1">
    <location>
        <position position="31"/>
    </location>
    <ligand>
        <name>AMP</name>
        <dbReference type="ChEBI" id="CHEBI:456215"/>
    </ligand>
</feature>
<feature type="binding site" evidence="1">
    <location>
        <position position="36"/>
    </location>
    <ligand>
        <name>AMP</name>
        <dbReference type="ChEBI" id="CHEBI:456215"/>
    </ligand>
</feature>
<feature type="binding site" evidence="1">
    <location>
        <begin position="57"/>
        <end position="59"/>
    </location>
    <ligand>
        <name>AMP</name>
        <dbReference type="ChEBI" id="CHEBI:456215"/>
    </ligand>
</feature>
<feature type="binding site" evidence="1">
    <location>
        <begin position="85"/>
        <end position="88"/>
    </location>
    <ligand>
        <name>AMP</name>
        <dbReference type="ChEBI" id="CHEBI:456215"/>
    </ligand>
</feature>
<feature type="binding site" evidence="1">
    <location>
        <position position="92"/>
    </location>
    <ligand>
        <name>AMP</name>
        <dbReference type="ChEBI" id="CHEBI:456215"/>
    </ligand>
</feature>
<feature type="binding site" evidence="1">
    <location>
        <position position="123"/>
    </location>
    <ligand>
        <name>ATP</name>
        <dbReference type="ChEBI" id="CHEBI:30616"/>
    </ligand>
</feature>
<feature type="binding site" evidence="1">
    <location>
        <begin position="132"/>
        <end position="133"/>
    </location>
    <ligand>
        <name>ATP</name>
        <dbReference type="ChEBI" id="CHEBI:30616"/>
    </ligand>
</feature>
<feature type="binding site" evidence="1">
    <location>
        <position position="156"/>
    </location>
    <ligand>
        <name>AMP</name>
        <dbReference type="ChEBI" id="CHEBI:456215"/>
    </ligand>
</feature>
<feature type="binding site" evidence="1">
    <location>
        <position position="167"/>
    </location>
    <ligand>
        <name>AMP</name>
        <dbReference type="ChEBI" id="CHEBI:456215"/>
    </ligand>
</feature>
<feature type="binding site" evidence="1">
    <location>
        <position position="203"/>
    </location>
    <ligand>
        <name>ATP</name>
        <dbReference type="ChEBI" id="CHEBI:30616"/>
    </ligand>
</feature>
<comment type="function">
    <text evidence="1">Catalyzes the reversible transfer of the terminal phosphate group between ATP and AMP. Plays an important role in cellular energy homeostasis and in adenine nucleotide metabolism.</text>
</comment>
<comment type="catalytic activity">
    <reaction evidence="1">
        <text>AMP + ATP = 2 ADP</text>
        <dbReference type="Rhea" id="RHEA:12973"/>
        <dbReference type="ChEBI" id="CHEBI:30616"/>
        <dbReference type="ChEBI" id="CHEBI:456215"/>
        <dbReference type="ChEBI" id="CHEBI:456216"/>
        <dbReference type="EC" id="2.7.4.3"/>
    </reaction>
</comment>
<comment type="pathway">
    <text evidence="1">Purine metabolism; AMP biosynthesis via salvage pathway; AMP from ADP: step 1/1.</text>
</comment>
<comment type="subunit">
    <text evidence="1">Monomer.</text>
</comment>
<comment type="subcellular location">
    <subcellularLocation>
        <location evidence="1">Cytoplasm</location>
    </subcellularLocation>
</comment>
<comment type="domain">
    <text evidence="1">Consists of three domains, a large central CORE domain and two small peripheral domains, NMPbind and LID, which undergo movements during catalysis. The LID domain closes over the site of phosphoryl transfer upon ATP binding. Assembling and dissambling the active center during each catalytic cycle provides an effective means to prevent ATP hydrolysis.</text>
</comment>
<comment type="similarity">
    <text evidence="1">Belongs to the adenylate kinase family.</text>
</comment>
<evidence type="ECO:0000255" key="1">
    <source>
        <dbReference type="HAMAP-Rule" id="MF_00235"/>
    </source>
</evidence>
<evidence type="ECO:0000256" key="2">
    <source>
        <dbReference type="SAM" id="MobiDB-lite"/>
    </source>
</evidence>
<keyword id="KW-0067">ATP-binding</keyword>
<keyword id="KW-0963">Cytoplasm</keyword>
<keyword id="KW-0418">Kinase</keyword>
<keyword id="KW-0545">Nucleotide biosynthesis</keyword>
<keyword id="KW-0547">Nucleotide-binding</keyword>
<keyword id="KW-0808">Transferase</keyword>
<gene>
    <name evidence="1" type="primary">adk</name>
    <name type="ordered locus">Ajs_2308</name>
</gene>